<gene>
    <name type="primary">SAMD12</name>
</gene>
<protein>
    <recommendedName>
        <fullName>Sterile alpha motif domain-containing protein 12</fullName>
        <shortName>SAM domain-containing protein 12</shortName>
    </recommendedName>
</protein>
<sequence length="201" mass="22907">MAVEALHCGLNPRGIDHPAHAEGIKLQIEGEGVESQSIKNKNFQKVPDQKGTPKRLQAEAETAKSATVKLSKPVALWTQQDVCKWLKKHCPNQYQIYSESFKQHDITGRALLRLTDKKLERMGIAQENLRQHILQQVLQLKVREEVRNLQLLTQGTLLLPDGWMDGEIRRKTTLLLGQTGVRENLLLFLHRISIIENSIQI</sequence>
<proteinExistence type="evidence at protein level"/>
<name>SAM12_HUMAN</name>
<reference key="1">
    <citation type="journal article" date="2004" name="Nat. Genet.">
        <title>Complete sequencing and characterization of 21,243 full-length human cDNAs.</title>
        <authorList>
            <person name="Ota T."/>
            <person name="Suzuki Y."/>
            <person name="Nishikawa T."/>
            <person name="Otsuki T."/>
            <person name="Sugiyama T."/>
            <person name="Irie R."/>
            <person name="Wakamatsu A."/>
            <person name="Hayashi K."/>
            <person name="Sato H."/>
            <person name="Nagai K."/>
            <person name="Kimura K."/>
            <person name="Makita H."/>
            <person name="Sekine M."/>
            <person name="Obayashi M."/>
            <person name="Nishi T."/>
            <person name="Shibahara T."/>
            <person name="Tanaka T."/>
            <person name="Ishii S."/>
            <person name="Yamamoto J."/>
            <person name="Saito K."/>
            <person name="Kawai Y."/>
            <person name="Isono Y."/>
            <person name="Nakamura Y."/>
            <person name="Nagahari K."/>
            <person name="Murakami K."/>
            <person name="Yasuda T."/>
            <person name="Iwayanagi T."/>
            <person name="Wagatsuma M."/>
            <person name="Shiratori A."/>
            <person name="Sudo H."/>
            <person name="Hosoiri T."/>
            <person name="Kaku Y."/>
            <person name="Kodaira H."/>
            <person name="Kondo H."/>
            <person name="Sugawara M."/>
            <person name="Takahashi M."/>
            <person name="Kanda K."/>
            <person name="Yokoi T."/>
            <person name="Furuya T."/>
            <person name="Kikkawa E."/>
            <person name="Omura Y."/>
            <person name="Abe K."/>
            <person name="Kamihara K."/>
            <person name="Katsuta N."/>
            <person name="Sato K."/>
            <person name="Tanikawa M."/>
            <person name="Yamazaki M."/>
            <person name="Ninomiya K."/>
            <person name="Ishibashi T."/>
            <person name="Yamashita H."/>
            <person name="Murakawa K."/>
            <person name="Fujimori K."/>
            <person name="Tanai H."/>
            <person name="Kimata M."/>
            <person name="Watanabe M."/>
            <person name="Hiraoka S."/>
            <person name="Chiba Y."/>
            <person name="Ishida S."/>
            <person name="Ono Y."/>
            <person name="Takiguchi S."/>
            <person name="Watanabe S."/>
            <person name="Yosida M."/>
            <person name="Hotuta T."/>
            <person name="Kusano J."/>
            <person name="Kanehori K."/>
            <person name="Takahashi-Fujii A."/>
            <person name="Hara H."/>
            <person name="Tanase T.-O."/>
            <person name="Nomura Y."/>
            <person name="Togiya S."/>
            <person name="Komai F."/>
            <person name="Hara R."/>
            <person name="Takeuchi K."/>
            <person name="Arita M."/>
            <person name="Imose N."/>
            <person name="Musashino K."/>
            <person name="Yuuki H."/>
            <person name="Oshima A."/>
            <person name="Sasaki N."/>
            <person name="Aotsuka S."/>
            <person name="Yoshikawa Y."/>
            <person name="Matsunawa H."/>
            <person name="Ichihara T."/>
            <person name="Shiohata N."/>
            <person name="Sano S."/>
            <person name="Moriya S."/>
            <person name="Momiyama H."/>
            <person name="Satoh N."/>
            <person name="Takami S."/>
            <person name="Terashima Y."/>
            <person name="Suzuki O."/>
            <person name="Nakagawa S."/>
            <person name="Senoh A."/>
            <person name="Mizoguchi H."/>
            <person name="Goto Y."/>
            <person name="Shimizu F."/>
            <person name="Wakebe H."/>
            <person name="Hishigaki H."/>
            <person name="Watanabe T."/>
            <person name="Sugiyama A."/>
            <person name="Takemoto M."/>
            <person name="Kawakami B."/>
            <person name="Yamazaki M."/>
            <person name="Watanabe K."/>
            <person name="Kumagai A."/>
            <person name="Itakura S."/>
            <person name="Fukuzumi Y."/>
            <person name="Fujimori Y."/>
            <person name="Komiyama M."/>
            <person name="Tashiro H."/>
            <person name="Tanigami A."/>
            <person name="Fujiwara T."/>
            <person name="Ono T."/>
            <person name="Yamada K."/>
            <person name="Fujii Y."/>
            <person name="Ozaki K."/>
            <person name="Hirao M."/>
            <person name="Ohmori Y."/>
            <person name="Kawabata A."/>
            <person name="Hikiji T."/>
            <person name="Kobatake N."/>
            <person name="Inagaki H."/>
            <person name="Ikema Y."/>
            <person name="Okamoto S."/>
            <person name="Okitani R."/>
            <person name="Kawakami T."/>
            <person name="Noguchi S."/>
            <person name="Itoh T."/>
            <person name="Shigeta K."/>
            <person name="Senba T."/>
            <person name="Matsumura K."/>
            <person name="Nakajima Y."/>
            <person name="Mizuno T."/>
            <person name="Morinaga M."/>
            <person name="Sasaki M."/>
            <person name="Togashi T."/>
            <person name="Oyama M."/>
            <person name="Hata H."/>
            <person name="Watanabe M."/>
            <person name="Komatsu T."/>
            <person name="Mizushima-Sugano J."/>
            <person name="Satoh T."/>
            <person name="Shirai Y."/>
            <person name="Takahashi Y."/>
            <person name="Nakagawa K."/>
            <person name="Okumura K."/>
            <person name="Nagase T."/>
            <person name="Nomura N."/>
            <person name="Kikuchi H."/>
            <person name="Masuho Y."/>
            <person name="Yamashita R."/>
            <person name="Nakai K."/>
            <person name="Yada T."/>
            <person name="Nakamura Y."/>
            <person name="Ohara O."/>
            <person name="Isogai T."/>
            <person name="Sugano S."/>
        </authorList>
    </citation>
    <scope>NUCLEOTIDE SEQUENCE [LARGE SCALE MRNA]</scope>
    <source>
        <tissue>Prostate</tissue>
    </source>
</reference>
<reference key="2">
    <citation type="journal article" date="2004" name="Genome Res.">
        <title>The status, quality, and expansion of the NIH full-length cDNA project: the Mammalian Gene Collection (MGC).</title>
        <authorList>
            <consortium name="The MGC Project Team"/>
        </authorList>
    </citation>
    <scope>NUCLEOTIDE SEQUENCE [LARGE SCALE MRNA]</scope>
</reference>
<reference key="3">
    <citation type="journal article" date="2018" name="Brain">
        <title>Intronic pentanucleotide TTTCA repeat insertion in the SAMD12 gene causes familial cortical myoclonic tremor with epilepsy type 1.</title>
        <authorList>
            <person name="Cen Z."/>
            <person name="Jiang Z."/>
            <person name="Chen Y."/>
            <person name="Zheng X."/>
            <person name="Xie F."/>
            <person name="Yang X."/>
            <person name="Lu X."/>
            <person name="Ouyang Z."/>
            <person name="Wu H."/>
            <person name="Chen S."/>
            <person name="Yin H."/>
            <person name="Qiu X."/>
            <person name="Wang S."/>
            <person name="Ding M."/>
            <person name="Tang Y."/>
            <person name="Yu F."/>
            <person name="Li C."/>
            <person name="Wang T."/>
            <person name="Ishiura H."/>
            <person name="Tsuji S."/>
            <person name="Jiao C."/>
            <person name="Liu C."/>
            <person name="Xiao J."/>
            <person name="Luo W."/>
        </authorList>
    </citation>
    <scope>INVOLVEMENT IN FAME1</scope>
</reference>
<reference key="4">
    <citation type="journal article" date="2018" name="Nat. Genet.">
        <title>Expansions of intronic TTTCA and TTTTA repeats in benign adult familial myoclonic epilepsy.</title>
        <authorList>
            <person name="Ishiura H."/>
            <person name="Doi K."/>
            <person name="Mitsui J."/>
            <person name="Yoshimura J."/>
            <person name="Matsukawa M.K."/>
            <person name="Fujiyama A."/>
            <person name="Toyoshima Y."/>
            <person name="Kakita A."/>
            <person name="Takahashi H."/>
            <person name="Suzuki Y."/>
            <person name="Sugano S."/>
            <person name="Qu W."/>
            <person name="Ichikawa K."/>
            <person name="Yurino H."/>
            <person name="Higasa K."/>
            <person name="Shibata S."/>
            <person name="Mitsue A."/>
            <person name="Tanaka M."/>
            <person name="Ichikawa Y."/>
            <person name="Takahashi Y."/>
            <person name="Date H."/>
            <person name="Matsukawa T."/>
            <person name="Kanda J."/>
            <person name="Nakamoto F.K."/>
            <person name="Higashihara M."/>
            <person name="Abe K."/>
            <person name="Koike R."/>
            <person name="Sasagawa M."/>
            <person name="Kuroha Y."/>
            <person name="Hasegawa N."/>
            <person name="Kanesawa N."/>
            <person name="Kondo T."/>
            <person name="Hitomi T."/>
            <person name="Tada M."/>
            <person name="Takano H."/>
            <person name="Saito Y."/>
            <person name="Sanpei K."/>
            <person name="Onodera O."/>
            <person name="Nishizawa M."/>
            <person name="Nakamura M."/>
            <person name="Yasuda T."/>
            <person name="Sakiyama Y."/>
            <person name="Otsuka M."/>
            <person name="Ueki A."/>
            <person name="Kaida K.I."/>
            <person name="Shimizu J."/>
            <person name="Hanajima R."/>
            <person name="Hayashi T."/>
            <person name="Terao Y."/>
            <person name="Inomata-Terada S."/>
            <person name="Hamada M."/>
            <person name="Shirota Y."/>
            <person name="Kubota A."/>
            <person name="Ugawa Y."/>
            <person name="Koh K."/>
            <person name="Takiyama Y."/>
            <person name="Ohsawa-Yoshida N."/>
            <person name="Ishiura S."/>
            <person name="Yamasaki R."/>
            <person name="Tamaoka A."/>
            <person name="Akiyama H."/>
            <person name="Otsuki T."/>
            <person name="Sano A."/>
            <person name="Ikeda A."/>
            <person name="Goto J."/>
            <person name="Morishita S."/>
            <person name="Tsuji S."/>
        </authorList>
    </citation>
    <scope>INVOLVEMENT IN FAME1</scope>
    <scope>TISSUE SPECIFICITY</scope>
</reference>
<keyword id="KW-0887">Epilepsy</keyword>
<keyword id="KW-1267">Proteomics identification</keyword>
<keyword id="KW-1185">Reference proteome</keyword>
<accession>Q8N8I0</accession>
<accession>Q0P502</accession>
<evidence type="ECO:0000255" key="1">
    <source>
        <dbReference type="PROSITE-ProRule" id="PRU00184"/>
    </source>
</evidence>
<evidence type="ECO:0000269" key="2">
    <source>
    </source>
</evidence>
<evidence type="ECO:0000269" key="3">
    <source>
    </source>
</evidence>
<evidence type="ECO:0000305" key="4"/>
<comment type="interaction">
    <interactant intactId="EBI-12965130">
        <id>Q8N8I0</id>
    </interactant>
    <interactant intactId="EBI-2511991">
        <id>Q9Y2K6</id>
        <label>USP20</label>
    </interactant>
    <organismsDiffer>false</organismsDiffer>
    <experiments>3</experiments>
</comment>
<comment type="tissue specificity">
    <text evidence="2">Expressed in the brain.</text>
</comment>
<comment type="disease" evidence="2 3">
    <disease id="DI-05296">
        <name>Epilepsy, familial adult myoclonic, 1</name>
        <acronym>FAME1</acronym>
        <description>A form of familial myoclonic epilepsy, a neurologic disorder characterized by cortical hand tremors, myoclonic jerks and occasional generalized or focal seizures with a non-progressive or very slowly progressive disease course. Usually, myoclonic tremor is the presenting symptom, characterized by tremulous finger movements and myoclonic jerks of the limbs increased by action and posture. In a minority of patients, seizures are the presenting symptom. Some patients exhibit mild cognitive impairment. FAME1 inheritance is autosomal dominant.</description>
        <dbReference type="MIM" id="601068"/>
    </disease>
    <text>The disease is caused by variants affecting the gene represented in this entry.</text>
</comment>
<organism>
    <name type="scientific">Homo sapiens</name>
    <name type="common">Human</name>
    <dbReference type="NCBI Taxonomy" id="9606"/>
    <lineage>
        <taxon>Eukaryota</taxon>
        <taxon>Metazoa</taxon>
        <taxon>Chordata</taxon>
        <taxon>Craniata</taxon>
        <taxon>Vertebrata</taxon>
        <taxon>Euteleostomi</taxon>
        <taxon>Mammalia</taxon>
        <taxon>Eutheria</taxon>
        <taxon>Euarchontoglires</taxon>
        <taxon>Primates</taxon>
        <taxon>Haplorrhini</taxon>
        <taxon>Catarrhini</taxon>
        <taxon>Hominidae</taxon>
        <taxon>Homo</taxon>
    </lineage>
</organism>
<dbReference type="EMBL" id="AK096777">
    <property type="protein sequence ID" value="BAC04861.1"/>
    <property type="molecule type" value="mRNA"/>
</dbReference>
<dbReference type="EMBL" id="BC121818">
    <property type="protein sequence ID" value="AAI21819.1"/>
    <property type="molecule type" value="mRNA"/>
</dbReference>
<dbReference type="EMBL" id="BC124554">
    <property type="protein sequence ID" value="AAI24555.1"/>
    <property type="molecule type" value="mRNA"/>
</dbReference>
<dbReference type="CCDS" id="CCDS6325.1"/>
<dbReference type="RefSeq" id="NP_997389.2">
    <property type="nucleotide sequence ID" value="NM_207506.3"/>
</dbReference>
<dbReference type="SMR" id="Q8N8I0"/>
<dbReference type="BioGRID" id="135100">
    <property type="interactions" value="13"/>
</dbReference>
<dbReference type="FunCoup" id="Q8N8I0">
    <property type="interactions" value="47"/>
</dbReference>
<dbReference type="IntAct" id="Q8N8I0">
    <property type="interactions" value="2"/>
</dbReference>
<dbReference type="STRING" id="9606.ENSP00000314173"/>
<dbReference type="iPTMnet" id="Q8N8I0"/>
<dbReference type="PhosphoSitePlus" id="Q8N8I0"/>
<dbReference type="BioMuta" id="SAMD12"/>
<dbReference type="DMDM" id="146345509"/>
<dbReference type="jPOST" id="Q8N8I0"/>
<dbReference type="MassIVE" id="Q8N8I0"/>
<dbReference type="PaxDb" id="9606-ENSP00000314173"/>
<dbReference type="PeptideAtlas" id="Q8N8I0"/>
<dbReference type="ProteomicsDB" id="72424"/>
<dbReference type="Pumba" id="Q8N8I0"/>
<dbReference type="Antibodypedia" id="13629">
    <property type="antibodies" value="69 antibodies from 14 providers"/>
</dbReference>
<dbReference type="DNASU" id="401474"/>
<dbReference type="Ensembl" id="ENST00000314727.9">
    <property type="protein sequence ID" value="ENSP00000314173.4"/>
    <property type="gene ID" value="ENSG00000177570.15"/>
</dbReference>
<dbReference type="GeneID" id="401474"/>
<dbReference type="KEGG" id="hsa:401474"/>
<dbReference type="MANE-Select" id="ENST00000314727.9">
    <property type="protein sequence ID" value="ENSP00000314173.4"/>
    <property type="RefSeq nucleotide sequence ID" value="NM_207506.3"/>
    <property type="RefSeq protein sequence ID" value="NP_997389.2"/>
</dbReference>
<dbReference type="UCSC" id="uc003yom.3">
    <property type="organism name" value="human"/>
</dbReference>
<dbReference type="AGR" id="HGNC:31750"/>
<dbReference type="CTD" id="401474"/>
<dbReference type="DisGeNET" id="401474"/>
<dbReference type="GeneCards" id="SAMD12"/>
<dbReference type="HGNC" id="HGNC:31750">
    <property type="gene designation" value="SAMD12"/>
</dbReference>
<dbReference type="HPA" id="ENSG00000177570">
    <property type="expression patterns" value="Low tissue specificity"/>
</dbReference>
<dbReference type="MalaCards" id="SAMD12"/>
<dbReference type="MIM" id="601068">
    <property type="type" value="phenotype"/>
</dbReference>
<dbReference type="MIM" id="618073">
    <property type="type" value="gene"/>
</dbReference>
<dbReference type="neXtProt" id="NX_Q8N8I0"/>
<dbReference type="OpenTargets" id="ENSG00000177570"/>
<dbReference type="Orphanet" id="86814">
    <property type="disease" value="Familialadult myoclonic epilepsy"/>
</dbReference>
<dbReference type="PharmGKB" id="PA134993493"/>
<dbReference type="VEuPathDB" id="HostDB:ENSG00000177570"/>
<dbReference type="eggNOG" id="ENOG502RXXU">
    <property type="taxonomic scope" value="Eukaryota"/>
</dbReference>
<dbReference type="GeneTree" id="ENSGT00390000008161"/>
<dbReference type="HOGENOM" id="CLU_105476_2_0_1"/>
<dbReference type="InParanoid" id="Q8N8I0"/>
<dbReference type="OMA" id="RQRVPHK"/>
<dbReference type="OrthoDB" id="434324at2759"/>
<dbReference type="PAN-GO" id="Q8N8I0">
    <property type="GO annotations" value="2 GO annotations based on evolutionary models"/>
</dbReference>
<dbReference type="PhylomeDB" id="Q8N8I0"/>
<dbReference type="TreeFam" id="TF325918"/>
<dbReference type="PathwayCommons" id="Q8N8I0"/>
<dbReference type="SignaLink" id="Q8N8I0"/>
<dbReference type="BioGRID-ORCS" id="401474">
    <property type="hits" value="14 hits in 1141 CRISPR screens"/>
</dbReference>
<dbReference type="ChiTaRS" id="SAMD12">
    <property type="organism name" value="human"/>
</dbReference>
<dbReference type="GenomeRNAi" id="401474"/>
<dbReference type="Pharos" id="Q8N8I0">
    <property type="development level" value="Tbio"/>
</dbReference>
<dbReference type="PRO" id="PR:Q8N8I0"/>
<dbReference type="Proteomes" id="UP000005640">
    <property type="component" value="Chromosome 8"/>
</dbReference>
<dbReference type="RNAct" id="Q8N8I0">
    <property type="molecule type" value="protein"/>
</dbReference>
<dbReference type="Bgee" id="ENSG00000177570">
    <property type="expression patterns" value="Expressed in colonic epithelium and 104 other cell types or tissues"/>
</dbReference>
<dbReference type="ExpressionAtlas" id="Q8N8I0">
    <property type="expression patterns" value="baseline and differential"/>
</dbReference>
<dbReference type="GO" id="GO:0009898">
    <property type="term" value="C:cytoplasmic side of plasma membrane"/>
    <property type="evidence" value="ECO:0000318"/>
    <property type="project" value="GO_Central"/>
</dbReference>
<dbReference type="GO" id="GO:0007169">
    <property type="term" value="P:cell surface receptor protein tyrosine kinase signaling pathway"/>
    <property type="evidence" value="ECO:0000318"/>
    <property type="project" value="GO_Central"/>
</dbReference>
<dbReference type="CDD" id="cd09510">
    <property type="entry name" value="SAM_aveugle-like"/>
    <property type="match status" value="1"/>
</dbReference>
<dbReference type="Gene3D" id="1.10.150.50">
    <property type="entry name" value="Transcription Factor, Ets-1"/>
    <property type="match status" value="1"/>
</dbReference>
<dbReference type="InterPro" id="IPR039144">
    <property type="entry name" value="Aveugle-like_SAM_dom"/>
</dbReference>
<dbReference type="InterPro" id="IPR001660">
    <property type="entry name" value="SAM"/>
</dbReference>
<dbReference type="InterPro" id="IPR013761">
    <property type="entry name" value="SAM/pointed_sf"/>
</dbReference>
<dbReference type="InterPro" id="IPR052268">
    <property type="entry name" value="SAM_domain-containing_protein"/>
</dbReference>
<dbReference type="PANTHER" id="PTHR20843">
    <property type="entry name" value="STERILE ALPHA MOTIF DOMAIN CONTAINING PROTEIN 10"/>
    <property type="match status" value="1"/>
</dbReference>
<dbReference type="PANTHER" id="PTHR20843:SF2">
    <property type="entry name" value="STERILE ALPHA MOTIF DOMAIN-CONTAINING PROTEIN 12"/>
    <property type="match status" value="1"/>
</dbReference>
<dbReference type="Pfam" id="PF07647">
    <property type="entry name" value="SAM_2"/>
    <property type="match status" value="1"/>
</dbReference>
<dbReference type="SMART" id="SM00454">
    <property type="entry name" value="SAM"/>
    <property type="match status" value="1"/>
</dbReference>
<dbReference type="SUPFAM" id="SSF47769">
    <property type="entry name" value="SAM/Pointed domain"/>
    <property type="match status" value="1"/>
</dbReference>
<dbReference type="PROSITE" id="PS50105">
    <property type="entry name" value="SAM_DOMAIN"/>
    <property type="match status" value="1"/>
</dbReference>
<feature type="chain" id="PRO_0000279502" description="Sterile alpha motif domain-containing protein 12">
    <location>
        <begin position="1"/>
        <end position="201"/>
    </location>
</feature>
<feature type="domain" description="SAM" evidence="1">
    <location>
        <begin position="77"/>
        <end position="143"/>
    </location>
</feature>
<feature type="sequence conflict" description="In Ref. 1; BAC04861." evidence="4" ref="1">
    <original>T</original>
    <variation>A</variation>
    <location>
        <position position="172"/>
    </location>
</feature>